<keyword id="KW-0963">Cytoplasm</keyword>
<keyword id="KW-0378">Hydrolase</keyword>
<keyword id="KW-0694">RNA-binding</keyword>
<keyword id="KW-0820">tRNA-binding</keyword>
<dbReference type="EC" id="3.1.1.29" evidence="1"/>
<dbReference type="EMBL" id="CP000030">
    <property type="protein sequence ID" value="AAV87124.1"/>
    <property type="molecule type" value="Genomic_DNA"/>
</dbReference>
<dbReference type="RefSeq" id="WP_010271083.1">
    <property type="nucleotide sequence ID" value="NZ_AFMU01000059.1"/>
</dbReference>
<dbReference type="SMR" id="Q5P9A6"/>
<dbReference type="KEGG" id="ama:AM1339"/>
<dbReference type="HOGENOM" id="CLU_062456_1_0_5"/>
<dbReference type="GO" id="GO:0005737">
    <property type="term" value="C:cytoplasm"/>
    <property type="evidence" value="ECO:0007669"/>
    <property type="project" value="UniProtKB-SubCell"/>
</dbReference>
<dbReference type="GO" id="GO:0004045">
    <property type="term" value="F:peptidyl-tRNA hydrolase activity"/>
    <property type="evidence" value="ECO:0007669"/>
    <property type="project" value="UniProtKB-UniRule"/>
</dbReference>
<dbReference type="GO" id="GO:0000049">
    <property type="term" value="F:tRNA binding"/>
    <property type="evidence" value="ECO:0007669"/>
    <property type="project" value="UniProtKB-UniRule"/>
</dbReference>
<dbReference type="GO" id="GO:0006515">
    <property type="term" value="P:protein quality control for misfolded or incompletely synthesized proteins"/>
    <property type="evidence" value="ECO:0007669"/>
    <property type="project" value="UniProtKB-UniRule"/>
</dbReference>
<dbReference type="GO" id="GO:0072344">
    <property type="term" value="P:rescue of stalled ribosome"/>
    <property type="evidence" value="ECO:0007669"/>
    <property type="project" value="UniProtKB-UniRule"/>
</dbReference>
<dbReference type="CDD" id="cd00462">
    <property type="entry name" value="PTH"/>
    <property type="match status" value="1"/>
</dbReference>
<dbReference type="Gene3D" id="3.40.50.1470">
    <property type="entry name" value="Peptidyl-tRNA hydrolase"/>
    <property type="match status" value="1"/>
</dbReference>
<dbReference type="HAMAP" id="MF_00083">
    <property type="entry name" value="Pept_tRNA_hydro_bact"/>
    <property type="match status" value="1"/>
</dbReference>
<dbReference type="InterPro" id="IPR001328">
    <property type="entry name" value="Pept_tRNA_hydro"/>
</dbReference>
<dbReference type="InterPro" id="IPR018171">
    <property type="entry name" value="Pept_tRNA_hydro_CS"/>
</dbReference>
<dbReference type="InterPro" id="IPR036416">
    <property type="entry name" value="Pept_tRNA_hydro_sf"/>
</dbReference>
<dbReference type="NCBIfam" id="TIGR00447">
    <property type="entry name" value="pth"/>
    <property type="match status" value="1"/>
</dbReference>
<dbReference type="PANTHER" id="PTHR17224">
    <property type="entry name" value="PEPTIDYL-TRNA HYDROLASE"/>
    <property type="match status" value="1"/>
</dbReference>
<dbReference type="PANTHER" id="PTHR17224:SF1">
    <property type="entry name" value="PEPTIDYL-TRNA HYDROLASE"/>
    <property type="match status" value="1"/>
</dbReference>
<dbReference type="Pfam" id="PF01195">
    <property type="entry name" value="Pept_tRNA_hydro"/>
    <property type="match status" value="1"/>
</dbReference>
<dbReference type="SUPFAM" id="SSF53178">
    <property type="entry name" value="Peptidyl-tRNA hydrolase-like"/>
    <property type="match status" value="1"/>
</dbReference>
<dbReference type="PROSITE" id="PS01195">
    <property type="entry name" value="PEPT_TRNA_HYDROL_1"/>
    <property type="match status" value="1"/>
</dbReference>
<dbReference type="PROSITE" id="PS01196">
    <property type="entry name" value="PEPT_TRNA_HYDROL_2"/>
    <property type="match status" value="1"/>
</dbReference>
<evidence type="ECO:0000255" key="1">
    <source>
        <dbReference type="HAMAP-Rule" id="MF_00083"/>
    </source>
</evidence>
<name>PTH_ANAMM</name>
<reference key="1">
    <citation type="journal article" date="2005" name="Proc. Natl. Acad. Sci. U.S.A.">
        <title>Complete genome sequencing of Anaplasma marginale reveals that the surface is skewed to two superfamilies of outer membrane proteins.</title>
        <authorList>
            <person name="Brayton K.A."/>
            <person name="Kappmeyer L.S."/>
            <person name="Herndon D.R."/>
            <person name="Dark M.J."/>
            <person name="Tibbals D.L."/>
            <person name="Palmer G.H."/>
            <person name="McGuire T.C."/>
            <person name="Knowles D.P. Jr."/>
        </authorList>
    </citation>
    <scope>NUCLEOTIDE SEQUENCE [LARGE SCALE GENOMIC DNA]</scope>
    <source>
        <strain>St. Maries</strain>
    </source>
</reference>
<organism>
    <name type="scientific">Anaplasma marginale (strain St. Maries)</name>
    <dbReference type="NCBI Taxonomy" id="234826"/>
    <lineage>
        <taxon>Bacteria</taxon>
        <taxon>Pseudomonadati</taxon>
        <taxon>Pseudomonadota</taxon>
        <taxon>Alphaproteobacteria</taxon>
        <taxon>Rickettsiales</taxon>
        <taxon>Anaplasmataceae</taxon>
        <taxon>Anaplasma</taxon>
    </lineage>
</organism>
<proteinExistence type="inferred from homology"/>
<comment type="function">
    <text evidence="1">Hydrolyzes ribosome-free peptidyl-tRNAs (with 1 or more amino acids incorporated), which drop off the ribosome during protein synthesis, or as a result of ribosome stalling.</text>
</comment>
<comment type="function">
    <text evidence="1">Catalyzes the release of premature peptidyl moieties from peptidyl-tRNA molecules trapped in stalled 50S ribosomal subunits, and thus maintains levels of free tRNAs and 50S ribosomes.</text>
</comment>
<comment type="catalytic activity">
    <reaction evidence="1">
        <text>an N-acyl-L-alpha-aminoacyl-tRNA + H2O = an N-acyl-L-amino acid + a tRNA + H(+)</text>
        <dbReference type="Rhea" id="RHEA:54448"/>
        <dbReference type="Rhea" id="RHEA-COMP:10123"/>
        <dbReference type="Rhea" id="RHEA-COMP:13883"/>
        <dbReference type="ChEBI" id="CHEBI:15377"/>
        <dbReference type="ChEBI" id="CHEBI:15378"/>
        <dbReference type="ChEBI" id="CHEBI:59874"/>
        <dbReference type="ChEBI" id="CHEBI:78442"/>
        <dbReference type="ChEBI" id="CHEBI:138191"/>
        <dbReference type="EC" id="3.1.1.29"/>
    </reaction>
</comment>
<comment type="subunit">
    <text evidence="1">Monomer.</text>
</comment>
<comment type="subcellular location">
    <subcellularLocation>
        <location evidence="1">Cytoplasm</location>
    </subcellularLocation>
</comment>
<comment type="similarity">
    <text evidence="1">Belongs to the PTH family.</text>
</comment>
<gene>
    <name evidence="1" type="primary">pth</name>
    <name type="ordered locus">AM1339</name>
</gene>
<accession>Q5P9A6</accession>
<protein>
    <recommendedName>
        <fullName evidence="1">Peptidyl-tRNA hydrolase</fullName>
        <shortName evidence="1">Pth</shortName>
        <ecNumber evidence="1">3.1.1.29</ecNumber>
    </recommendedName>
</protein>
<sequence>MLLLVGLGNPGKQYEFTRHNVGFVVADTVARDFNFPEFSSKYDALVSVGNVGLHRAMIVKPATFMNRSGAAVLKAASMHKIPAEQITVFHDDADLQHGVVKVKQGGGNAGHNGLRSIDAAIGCQYWRVRLGVGRPDVGSLSGHVLSDFHDFDSVQQLAHKISANLTELLDGNVNGFISKIRCDHAQ</sequence>
<feature type="chain" id="PRO_0000187679" description="Peptidyl-tRNA hydrolase">
    <location>
        <begin position="1"/>
        <end position="186"/>
    </location>
</feature>
<feature type="active site" description="Proton acceptor" evidence="1">
    <location>
        <position position="19"/>
    </location>
</feature>
<feature type="binding site" evidence="1">
    <location>
        <position position="14"/>
    </location>
    <ligand>
        <name>tRNA</name>
        <dbReference type="ChEBI" id="CHEBI:17843"/>
    </ligand>
</feature>
<feature type="binding site" evidence="1">
    <location>
        <position position="64"/>
    </location>
    <ligand>
        <name>tRNA</name>
        <dbReference type="ChEBI" id="CHEBI:17843"/>
    </ligand>
</feature>
<feature type="binding site" evidence="1">
    <location>
        <position position="66"/>
    </location>
    <ligand>
        <name>tRNA</name>
        <dbReference type="ChEBI" id="CHEBI:17843"/>
    </ligand>
</feature>
<feature type="binding site" evidence="1">
    <location>
        <position position="112"/>
    </location>
    <ligand>
        <name>tRNA</name>
        <dbReference type="ChEBI" id="CHEBI:17843"/>
    </ligand>
</feature>
<feature type="site" description="Discriminates between blocked and unblocked aminoacyl-tRNA" evidence="1">
    <location>
        <position position="9"/>
    </location>
</feature>
<feature type="site" description="Stabilizes the basic form of H active site to accept a proton" evidence="1">
    <location>
        <position position="91"/>
    </location>
</feature>